<proteinExistence type="inferred from homology"/>
<protein>
    <recommendedName>
        <fullName evidence="1">DNA-directed RNA polymerase subunit Rpo12</fullName>
        <ecNumber evidence="1">2.7.7.6</ecNumber>
    </recommendedName>
    <alternativeName>
        <fullName evidence="1">DNA-directed RNA polymerase subunit P</fullName>
    </alternativeName>
</protein>
<feature type="chain" id="PRO_1000212275" description="DNA-directed RNA polymerase subunit Rpo12">
    <location>
        <begin position="1"/>
        <end position="48"/>
    </location>
</feature>
<feature type="binding site" evidence="1">
    <location>
        <position position="9"/>
    </location>
    <ligand>
        <name>Zn(2+)</name>
        <dbReference type="ChEBI" id="CHEBI:29105"/>
    </ligand>
</feature>
<feature type="binding site" evidence="1">
    <location>
        <position position="26"/>
    </location>
    <ligand>
        <name>Zn(2+)</name>
        <dbReference type="ChEBI" id="CHEBI:29105"/>
    </ligand>
</feature>
<feature type="binding site" evidence="1">
    <location>
        <position position="29"/>
    </location>
    <ligand>
        <name>Zn(2+)</name>
        <dbReference type="ChEBI" id="CHEBI:29105"/>
    </ligand>
</feature>
<name>RPO12_SACI2</name>
<dbReference type="EC" id="2.7.7.6" evidence="1"/>
<dbReference type="EMBL" id="CP001399">
    <property type="protein sequence ID" value="ACP35784.1"/>
    <property type="molecule type" value="Genomic_DNA"/>
</dbReference>
<dbReference type="RefSeq" id="WP_009988725.1">
    <property type="nucleotide sequence ID" value="NC_012589.1"/>
</dbReference>
<dbReference type="SMR" id="C3MQX1"/>
<dbReference type="KEGG" id="sis:LS215_1788"/>
<dbReference type="HOGENOM" id="CLU_179456_2_0_2"/>
<dbReference type="OrthoDB" id="129238at2157"/>
<dbReference type="Proteomes" id="UP000001747">
    <property type="component" value="Chromosome"/>
</dbReference>
<dbReference type="GO" id="GO:0005737">
    <property type="term" value="C:cytoplasm"/>
    <property type="evidence" value="ECO:0007669"/>
    <property type="project" value="UniProtKB-SubCell"/>
</dbReference>
<dbReference type="GO" id="GO:0000428">
    <property type="term" value="C:DNA-directed RNA polymerase complex"/>
    <property type="evidence" value="ECO:0007669"/>
    <property type="project" value="UniProtKB-KW"/>
</dbReference>
<dbReference type="GO" id="GO:0003677">
    <property type="term" value="F:DNA binding"/>
    <property type="evidence" value="ECO:0007669"/>
    <property type="project" value="InterPro"/>
</dbReference>
<dbReference type="GO" id="GO:0003899">
    <property type="term" value="F:DNA-directed RNA polymerase activity"/>
    <property type="evidence" value="ECO:0007669"/>
    <property type="project" value="UniProtKB-UniRule"/>
</dbReference>
<dbReference type="GO" id="GO:0008270">
    <property type="term" value="F:zinc ion binding"/>
    <property type="evidence" value="ECO:0007669"/>
    <property type="project" value="UniProtKB-UniRule"/>
</dbReference>
<dbReference type="GO" id="GO:0006351">
    <property type="term" value="P:DNA-templated transcription"/>
    <property type="evidence" value="ECO:0007669"/>
    <property type="project" value="UniProtKB-UniRule"/>
</dbReference>
<dbReference type="Gene3D" id="2.20.28.30">
    <property type="entry name" value="RNA polymerase ii, chain L"/>
    <property type="match status" value="1"/>
</dbReference>
<dbReference type="HAMAP" id="MF_00615">
    <property type="entry name" value="RNApol_arch_Rpo12"/>
    <property type="match status" value="1"/>
</dbReference>
<dbReference type="InterPro" id="IPR006591">
    <property type="entry name" value="RNAP_P/RPABC4"/>
</dbReference>
<dbReference type="InterPro" id="IPR029040">
    <property type="entry name" value="RPABC4/Spt4"/>
</dbReference>
<dbReference type="InterPro" id="IPR023464">
    <property type="entry name" value="Rpo12"/>
</dbReference>
<dbReference type="NCBIfam" id="NF001604">
    <property type="entry name" value="PRK00398.1-1"/>
    <property type="match status" value="1"/>
</dbReference>
<dbReference type="SMART" id="SM00659">
    <property type="entry name" value="RPOLCX"/>
    <property type="match status" value="1"/>
</dbReference>
<dbReference type="SUPFAM" id="SSF63393">
    <property type="entry name" value="RNA polymerase subunits"/>
    <property type="match status" value="1"/>
</dbReference>
<organism>
    <name type="scientific">Saccharolobus islandicus (strain L.S.2.15 / Lassen #1)</name>
    <name type="common">Sulfolobus islandicus</name>
    <dbReference type="NCBI Taxonomy" id="429572"/>
    <lineage>
        <taxon>Archaea</taxon>
        <taxon>Thermoproteota</taxon>
        <taxon>Thermoprotei</taxon>
        <taxon>Sulfolobales</taxon>
        <taxon>Sulfolobaceae</taxon>
        <taxon>Saccharolobus</taxon>
    </lineage>
</organism>
<sequence>MAVYRCGKCWKTFTDEQLKVLPGVRCPYCGYKIIFMVRKPTIKIVKAI</sequence>
<comment type="function">
    <text evidence="1">DNA-dependent RNA polymerase (RNAP) catalyzes the transcription of DNA into RNA using the four ribonucleoside triphosphates as substrates.</text>
</comment>
<comment type="catalytic activity">
    <reaction evidence="1">
        <text>RNA(n) + a ribonucleoside 5'-triphosphate = RNA(n+1) + diphosphate</text>
        <dbReference type="Rhea" id="RHEA:21248"/>
        <dbReference type="Rhea" id="RHEA-COMP:14527"/>
        <dbReference type="Rhea" id="RHEA-COMP:17342"/>
        <dbReference type="ChEBI" id="CHEBI:33019"/>
        <dbReference type="ChEBI" id="CHEBI:61557"/>
        <dbReference type="ChEBI" id="CHEBI:140395"/>
        <dbReference type="EC" id="2.7.7.6"/>
    </reaction>
</comment>
<comment type="cofactor">
    <cofactor evidence="1">
        <name>Zn(2+)</name>
        <dbReference type="ChEBI" id="CHEBI:29105"/>
    </cofactor>
    <text evidence="1">Binds 1 zinc ion.</text>
</comment>
<comment type="subunit">
    <text evidence="1">Part of the RNA polymerase complex.</text>
</comment>
<comment type="subcellular location">
    <subcellularLocation>
        <location evidence="1">Cytoplasm</location>
    </subcellularLocation>
</comment>
<comment type="similarity">
    <text evidence="1">Belongs to the archaeal Rpo12/eukaryotic RPC10 RNA polymerase subunit family.</text>
</comment>
<accession>C3MQX1</accession>
<evidence type="ECO:0000255" key="1">
    <source>
        <dbReference type="HAMAP-Rule" id="MF_00615"/>
    </source>
</evidence>
<reference key="1">
    <citation type="journal article" date="2009" name="Proc. Natl. Acad. Sci. U.S.A.">
        <title>Biogeography of the Sulfolobus islandicus pan-genome.</title>
        <authorList>
            <person name="Reno M.L."/>
            <person name="Held N.L."/>
            <person name="Fields C.J."/>
            <person name="Burke P.V."/>
            <person name="Whitaker R.J."/>
        </authorList>
    </citation>
    <scope>NUCLEOTIDE SEQUENCE [LARGE SCALE GENOMIC DNA]</scope>
    <source>
        <strain>L.S.2.15 / Lassen #1</strain>
    </source>
</reference>
<gene>
    <name evidence="1" type="primary">rpo12</name>
    <name evidence="1" type="synonym">rpoP</name>
    <name type="ordered locus">LS215_1788</name>
</gene>
<keyword id="KW-0963">Cytoplasm</keyword>
<keyword id="KW-0240">DNA-directed RNA polymerase</keyword>
<keyword id="KW-0479">Metal-binding</keyword>
<keyword id="KW-0548">Nucleotidyltransferase</keyword>
<keyword id="KW-0804">Transcription</keyword>
<keyword id="KW-0808">Transferase</keyword>
<keyword id="KW-0862">Zinc</keyword>